<evidence type="ECO:0000255" key="1">
    <source>
        <dbReference type="HAMAP-Rule" id="MF_00076"/>
    </source>
</evidence>
<comment type="catalytic activity">
    <reaction evidence="1">
        <text>D-erythro-1-(imidazol-4-yl)glycerol 3-phosphate = 3-(imidazol-4-yl)-2-oxopropyl phosphate + H2O</text>
        <dbReference type="Rhea" id="RHEA:11040"/>
        <dbReference type="ChEBI" id="CHEBI:15377"/>
        <dbReference type="ChEBI" id="CHEBI:57766"/>
        <dbReference type="ChEBI" id="CHEBI:58278"/>
        <dbReference type="EC" id="4.2.1.19"/>
    </reaction>
</comment>
<comment type="pathway">
    <text evidence="1">Amino-acid biosynthesis; L-histidine biosynthesis; L-histidine from 5-phospho-alpha-D-ribose 1-diphosphate: step 6/9.</text>
</comment>
<comment type="subcellular location">
    <subcellularLocation>
        <location evidence="1">Cytoplasm</location>
    </subcellularLocation>
</comment>
<comment type="similarity">
    <text evidence="1">Belongs to the imidazoleglycerol-phosphate dehydratase family.</text>
</comment>
<protein>
    <recommendedName>
        <fullName evidence="1">Imidazoleglycerol-phosphate dehydratase</fullName>
        <shortName evidence="1">IGPD</shortName>
        <ecNumber evidence="1">4.2.1.19</ecNumber>
    </recommendedName>
</protein>
<organism>
    <name type="scientific">Dictyoglomus turgidum (strain DSM 6724 / Z-1310)</name>
    <dbReference type="NCBI Taxonomy" id="515635"/>
    <lineage>
        <taxon>Bacteria</taxon>
        <taxon>Pseudomonadati</taxon>
        <taxon>Dictyoglomota</taxon>
        <taxon>Dictyoglomia</taxon>
        <taxon>Dictyoglomales</taxon>
        <taxon>Dictyoglomaceae</taxon>
        <taxon>Dictyoglomus</taxon>
    </lineage>
</organism>
<dbReference type="EC" id="4.2.1.19" evidence="1"/>
<dbReference type="EMBL" id="CP001251">
    <property type="protein sequence ID" value="ACK42402.1"/>
    <property type="molecule type" value="Genomic_DNA"/>
</dbReference>
<dbReference type="RefSeq" id="WP_012583485.1">
    <property type="nucleotide sequence ID" value="NC_011661.1"/>
</dbReference>
<dbReference type="RefSeq" id="YP_002353016.1">
    <property type="nucleotide sequence ID" value="NC_011661.1"/>
</dbReference>
<dbReference type="SMR" id="B8E2C5"/>
<dbReference type="FunCoup" id="B8E2C5">
    <property type="interactions" value="318"/>
</dbReference>
<dbReference type="STRING" id="515635.Dtur_1123"/>
<dbReference type="EnsemblBacteria" id="ACK42402">
    <property type="protein sequence ID" value="ACK42402"/>
    <property type="gene ID" value="Dtur_1123"/>
</dbReference>
<dbReference type="KEGG" id="dtu:Dtur_1123"/>
<dbReference type="PATRIC" id="fig|515635.4.peg.1160"/>
<dbReference type="eggNOG" id="COG0131">
    <property type="taxonomic scope" value="Bacteria"/>
</dbReference>
<dbReference type="HOGENOM" id="CLU_044308_2_1_0"/>
<dbReference type="InParanoid" id="B8E2C5"/>
<dbReference type="OrthoDB" id="9813612at2"/>
<dbReference type="UniPathway" id="UPA00031">
    <property type="reaction ID" value="UER00011"/>
</dbReference>
<dbReference type="Proteomes" id="UP000007719">
    <property type="component" value="Chromosome"/>
</dbReference>
<dbReference type="GO" id="GO:0005737">
    <property type="term" value="C:cytoplasm"/>
    <property type="evidence" value="ECO:0007669"/>
    <property type="project" value="UniProtKB-SubCell"/>
</dbReference>
<dbReference type="GO" id="GO:0004424">
    <property type="term" value="F:imidazoleglycerol-phosphate dehydratase activity"/>
    <property type="evidence" value="ECO:0000318"/>
    <property type="project" value="GO_Central"/>
</dbReference>
<dbReference type="GO" id="GO:0000105">
    <property type="term" value="P:L-histidine biosynthetic process"/>
    <property type="evidence" value="ECO:0000318"/>
    <property type="project" value="GO_Central"/>
</dbReference>
<dbReference type="FunFam" id="3.30.230.40:FF:000001">
    <property type="entry name" value="Imidazoleglycerol-phosphate dehydratase HisB"/>
    <property type="match status" value="1"/>
</dbReference>
<dbReference type="FunFam" id="3.30.230.40:FF:000003">
    <property type="entry name" value="Imidazoleglycerol-phosphate dehydratase HisB"/>
    <property type="match status" value="1"/>
</dbReference>
<dbReference type="Gene3D" id="3.30.230.40">
    <property type="entry name" value="Imidazole glycerol phosphate dehydratase, domain 1"/>
    <property type="match status" value="2"/>
</dbReference>
<dbReference type="HAMAP" id="MF_00076">
    <property type="entry name" value="HisB"/>
    <property type="match status" value="1"/>
</dbReference>
<dbReference type="InterPro" id="IPR038494">
    <property type="entry name" value="IGPD_sf"/>
</dbReference>
<dbReference type="InterPro" id="IPR000807">
    <property type="entry name" value="ImidazoleglycerolP_deHydtase"/>
</dbReference>
<dbReference type="InterPro" id="IPR020565">
    <property type="entry name" value="ImidazoleglycerP_deHydtase_CS"/>
</dbReference>
<dbReference type="InterPro" id="IPR020568">
    <property type="entry name" value="Ribosomal_Su5_D2-typ_SF"/>
</dbReference>
<dbReference type="PANTHER" id="PTHR23133:SF2">
    <property type="entry name" value="IMIDAZOLEGLYCEROL-PHOSPHATE DEHYDRATASE"/>
    <property type="match status" value="1"/>
</dbReference>
<dbReference type="PANTHER" id="PTHR23133">
    <property type="entry name" value="IMIDAZOLEGLYCEROL-PHOSPHATE DEHYDRATASE HIS7"/>
    <property type="match status" value="1"/>
</dbReference>
<dbReference type="Pfam" id="PF00475">
    <property type="entry name" value="IGPD"/>
    <property type="match status" value="1"/>
</dbReference>
<dbReference type="SUPFAM" id="SSF54211">
    <property type="entry name" value="Ribosomal protein S5 domain 2-like"/>
    <property type="match status" value="2"/>
</dbReference>
<dbReference type="PROSITE" id="PS00955">
    <property type="entry name" value="IGP_DEHYDRATASE_2"/>
    <property type="match status" value="1"/>
</dbReference>
<proteinExistence type="inferred from homology"/>
<accession>B8E2C5</accession>
<gene>
    <name evidence="1" type="primary">hisB</name>
    <name type="ordered locus">Dtur_1123</name>
</gene>
<feature type="chain" id="PRO_1000117083" description="Imidazoleglycerol-phosphate dehydratase">
    <location>
        <begin position="1"/>
        <end position="186"/>
    </location>
</feature>
<keyword id="KW-0028">Amino-acid biosynthesis</keyword>
<keyword id="KW-0963">Cytoplasm</keyword>
<keyword id="KW-0368">Histidine biosynthesis</keyword>
<keyword id="KW-0456">Lyase</keyword>
<keyword id="KW-1185">Reference proteome</keyword>
<sequence>MRKSEIERETKETYVKILLNLDGSGSFLGDFPVPYYKHLFSAFCFYAEWDVEIMAKGDVEVDPHHLIEDTGIVWGKAFYSAVSNSNFLRFSSKIVPMDEALVMAVVDISGRPYLEIRDDKGILNGRLIKEFLRGFVNNSQITLHIWLLSGENLHHIEEAIFKALGLALGEASKEVPNLKSTKGKIW</sequence>
<reference key="1">
    <citation type="journal article" date="2016" name="Front. Microbiol.">
        <title>The complete genome sequence of hyperthermophile Dictyoglomus turgidum DSM 6724 reveals a specialized carbohydrate fermentor.</title>
        <authorList>
            <person name="Brumm P.J."/>
            <person name="Gowda K."/>
            <person name="Robb F.T."/>
            <person name="Mead D.A."/>
        </authorList>
    </citation>
    <scope>NUCLEOTIDE SEQUENCE [LARGE SCALE GENOMIC DNA]</scope>
    <source>
        <strain>DSM 6724 / Z-1310</strain>
    </source>
</reference>
<name>HIS7_DICTD</name>